<protein>
    <recommendedName>
        <fullName evidence="1">Polyisoprenyl-teichoic acid--peptidoglycan teichoic acid transferase TagU</fullName>
        <ecNumber evidence="1">2.7.8.-</ecNumber>
    </recommendedName>
</protein>
<sequence>MRAEKRKKKKKILYTIIALIGIFVLSTGSYAYYLWHKAASTVANIHENINKSKKRDSAVDIDNHDPFSVLLMGVDERDGDKGRADSLIYMTVNPKTKTTEMVSIPRDTYTEIIGKGKMDKINHSYAFGGVQMTVDTVENFLDVPVDYFIKVNMESFKDVVDTLGGITVNSTFAFNYDGYSFGKGEITLNGKEALAYTRMRKEDPNGDFGRQNRQRQVIEGIINKGANISSITKFGDMFKVIENNVKTNLTFDDMWDIQSGYKEARSKVIQHELKGDGTKINGIYYYKADESSLSDITAELKESLNK</sequence>
<evidence type="ECO:0000255" key="1">
    <source>
        <dbReference type="HAMAP-Rule" id="MF_01140"/>
    </source>
</evidence>
<accession>Q65E87</accession>
<accession>Q62PQ7</accession>
<proteinExistence type="inferred from homology"/>
<reference key="1">
    <citation type="journal article" date="2004" name="J. Mol. Microbiol. Biotechnol.">
        <title>The complete genome sequence of Bacillus licheniformis DSM13, an organism with great industrial potential.</title>
        <authorList>
            <person name="Veith B."/>
            <person name="Herzberg C."/>
            <person name="Steckel S."/>
            <person name="Feesche J."/>
            <person name="Maurer K.H."/>
            <person name="Ehrenreich P."/>
            <person name="Baeumer S."/>
            <person name="Henne A."/>
            <person name="Liesegang H."/>
            <person name="Merkl R."/>
            <person name="Ehrenreich A."/>
            <person name="Gottschalk G."/>
        </authorList>
    </citation>
    <scope>NUCLEOTIDE SEQUENCE [LARGE SCALE GENOMIC DNA]</scope>
    <source>
        <strain>ATCC 14580 / DSM 13 / JCM 2505 / CCUG 7422 / NBRC 12200 / NCIMB 9375 / NCTC 10341 / NRRL NRS-1264 / Gibson 46</strain>
    </source>
</reference>
<reference key="2">
    <citation type="journal article" date="2004" name="Genome Biol.">
        <title>Complete genome sequence of the industrial bacterium Bacillus licheniformis and comparisons with closely related Bacillus species.</title>
        <authorList>
            <person name="Rey M.W."/>
            <person name="Ramaiya P."/>
            <person name="Nelson B.A."/>
            <person name="Brody-Karpin S.D."/>
            <person name="Zaretsky E.J."/>
            <person name="Tang M."/>
            <person name="Lopez de Leon A."/>
            <person name="Xiang H."/>
            <person name="Gusti V."/>
            <person name="Clausen I.G."/>
            <person name="Olsen P.B."/>
            <person name="Rasmussen M.D."/>
            <person name="Andersen J.T."/>
            <person name="Joergensen P.L."/>
            <person name="Larsen T.S."/>
            <person name="Sorokin A."/>
            <person name="Bolotin A."/>
            <person name="Lapidus A."/>
            <person name="Galleron N."/>
            <person name="Ehrlich S.D."/>
            <person name="Berka R.M."/>
        </authorList>
    </citation>
    <scope>NUCLEOTIDE SEQUENCE [LARGE SCALE GENOMIC DNA]</scope>
    <source>
        <strain>ATCC 14580 / DSM 13 / JCM 2505 / CCUG 7422 / NBRC 12200 / NCIMB 9375 / NCTC 10341 / NRRL NRS-1264 / Gibson 46</strain>
    </source>
</reference>
<keyword id="KW-1003">Cell membrane</keyword>
<keyword id="KW-0961">Cell wall biogenesis/degradation</keyword>
<keyword id="KW-0472">Membrane</keyword>
<keyword id="KW-1185">Reference proteome</keyword>
<keyword id="KW-0735">Signal-anchor</keyword>
<keyword id="KW-0808">Transferase</keyword>
<keyword id="KW-0812">Transmembrane</keyword>
<keyword id="KW-1133">Transmembrane helix</keyword>
<gene>
    <name evidence="1" type="primary">tagU</name>
    <name type="ordered locus">BLi03811</name>
    <name type="ordered locus">BL02430</name>
</gene>
<name>TAGU_BACLD</name>
<feature type="chain" id="PRO_1000065433" description="Polyisoprenyl-teichoic acid--peptidoglycan teichoic acid transferase TagU">
    <location>
        <begin position="1"/>
        <end position="306"/>
    </location>
</feature>
<feature type="topological domain" description="Cytoplasmic" evidence="1">
    <location>
        <begin position="1"/>
        <end position="11"/>
    </location>
</feature>
<feature type="transmembrane region" description="Helical; Signal-anchor for type II membrane protein" evidence="1">
    <location>
        <begin position="12"/>
        <end position="32"/>
    </location>
</feature>
<feature type="topological domain" description="Extracellular" evidence="1">
    <location>
        <begin position="33"/>
        <end position="306"/>
    </location>
</feature>
<dbReference type="EC" id="2.7.8.-" evidence="1"/>
<dbReference type="EMBL" id="CP000002">
    <property type="protein sequence ID" value="AAU25254.1"/>
    <property type="molecule type" value="Genomic_DNA"/>
</dbReference>
<dbReference type="EMBL" id="AE017333">
    <property type="protein sequence ID" value="AAU42627.1"/>
    <property type="molecule type" value="Genomic_DNA"/>
</dbReference>
<dbReference type="RefSeq" id="WP_011198358.1">
    <property type="nucleotide sequence ID" value="NC_006322.1"/>
</dbReference>
<dbReference type="SMR" id="Q65E87"/>
<dbReference type="STRING" id="279010.BL02430"/>
<dbReference type="DNASU" id="3101012"/>
<dbReference type="KEGG" id="bld:BLi03811"/>
<dbReference type="KEGG" id="bli:BL02430"/>
<dbReference type="PATRIC" id="fig|279010.13.peg.3877"/>
<dbReference type="eggNOG" id="COG1316">
    <property type="taxonomic scope" value="Bacteria"/>
</dbReference>
<dbReference type="HOGENOM" id="CLU_016455_2_2_9"/>
<dbReference type="Proteomes" id="UP000000606">
    <property type="component" value="Chromosome"/>
</dbReference>
<dbReference type="GO" id="GO:0005886">
    <property type="term" value="C:plasma membrane"/>
    <property type="evidence" value="ECO:0007669"/>
    <property type="project" value="UniProtKB-SubCell"/>
</dbReference>
<dbReference type="GO" id="GO:0016780">
    <property type="term" value="F:phosphotransferase activity, for other substituted phosphate groups"/>
    <property type="evidence" value="ECO:0007669"/>
    <property type="project" value="UniProtKB-UniRule"/>
</dbReference>
<dbReference type="GO" id="GO:0070726">
    <property type="term" value="P:cell wall assembly"/>
    <property type="evidence" value="ECO:0007669"/>
    <property type="project" value="UniProtKB-UniRule"/>
</dbReference>
<dbReference type="Gene3D" id="3.40.630.190">
    <property type="entry name" value="LCP protein"/>
    <property type="match status" value="1"/>
</dbReference>
<dbReference type="HAMAP" id="MF_01140">
    <property type="entry name" value="TagU_transferase"/>
    <property type="match status" value="1"/>
</dbReference>
<dbReference type="InterPro" id="IPR050922">
    <property type="entry name" value="LytR/CpsA/Psr_CW_biosynth"/>
</dbReference>
<dbReference type="InterPro" id="IPR004474">
    <property type="entry name" value="LytR_CpsA_psr"/>
</dbReference>
<dbReference type="InterPro" id="IPR023734">
    <property type="entry name" value="TagU"/>
</dbReference>
<dbReference type="NCBIfam" id="TIGR00350">
    <property type="entry name" value="lytR_cpsA_psr"/>
    <property type="match status" value="1"/>
</dbReference>
<dbReference type="NCBIfam" id="NF006897">
    <property type="entry name" value="PRK09379.1"/>
    <property type="match status" value="1"/>
</dbReference>
<dbReference type="PANTHER" id="PTHR33392">
    <property type="entry name" value="POLYISOPRENYL-TEICHOIC ACID--PEPTIDOGLYCAN TEICHOIC ACID TRANSFERASE TAGU"/>
    <property type="match status" value="1"/>
</dbReference>
<dbReference type="PANTHER" id="PTHR33392:SF6">
    <property type="entry name" value="POLYISOPRENYL-TEICHOIC ACID--PEPTIDOGLYCAN TEICHOIC ACID TRANSFERASE TAGU"/>
    <property type="match status" value="1"/>
</dbReference>
<dbReference type="Pfam" id="PF03816">
    <property type="entry name" value="LytR_cpsA_psr"/>
    <property type="match status" value="1"/>
</dbReference>
<organism>
    <name type="scientific">Bacillus licheniformis (strain ATCC 14580 / DSM 13 / JCM 2505 / CCUG 7422 / NBRC 12200 / NCIMB 9375 / NCTC 10341 / NRRL NRS-1264 / Gibson 46)</name>
    <dbReference type="NCBI Taxonomy" id="279010"/>
    <lineage>
        <taxon>Bacteria</taxon>
        <taxon>Bacillati</taxon>
        <taxon>Bacillota</taxon>
        <taxon>Bacilli</taxon>
        <taxon>Bacillales</taxon>
        <taxon>Bacillaceae</taxon>
        <taxon>Bacillus</taxon>
    </lineage>
</organism>
<comment type="function">
    <text evidence="1">May catalyze the final step in cell wall teichoic acid biosynthesis, the transfer of the anionic cell wall polymers (APs) from their lipid-linked precursor to the cell wall peptidoglycan (PG).</text>
</comment>
<comment type="pathway">
    <text evidence="1">Cell wall biogenesis.</text>
</comment>
<comment type="subcellular location">
    <subcellularLocation>
        <location evidence="1">Cell membrane</location>
        <topology evidence="1">Single-pass type II membrane protein</topology>
    </subcellularLocation>
</comment>
<comment type="similarity">
    <text evidence="1">Belongs to the LytR/CpsA/Psr (LCP) family.</text>
</comment>